<dbReference type="EC" id="2.1.1.-" evidence="2"/>
<dbReference type="EMBL" id="OQ091243">
    <property type="protein sequence ID" value="WCJ12488.1"/>
    <property type="molecule type" value="mRNA"/>
</dbReference>
<dbReference type="EMBL" id="KK784950">
    <property type="protein sequence ID" value="KDO58318.1"/>
    <property type="molecule type" value="Genomic_DNA"/>
</dbReference>
<dbReference type="SMR" id="A0A067ETA8"/>
<dbReference type="UniPathway" id="UPA00213"/>
<dbReference type="Proteomes" id="UP000027120">
    <property type="component" value="Unassembled WGS sequence"/>
</dbReference>
<dbReference type="GO" id="GO:0016746">
    <property type="term" value="F:acyltransferase activity"/>
    <property type="evidence" value="ECO:0007669"/>
    <property type="project" value="UniProtKB-KW"/>
</dbReference>
<dbReference type="GO" id="GO:0016491">
    <property type="term" value="F:oxidoreductase activity"/>
    <property type="evidence" value="ECO:0007669"/>
    <property type="project" value="UniProtKB-KW"/>
</dbReference>
<dbReference type="Gene3D" id="3.30.559.10">
    <property type="entry name" value="Chloramphenicol acetyltransferase-like domain"/>
    <property type="match status" value="2"/>
</dbReference>
<dbReference type="InterPro" id="IPR023213">
    <property type="entry name" value="CAT-like_dom_sf"/>
</dbReference>
<dbReference type="PANTHER" id="PTHR31623">
    <property type="entry name" value="F21J9.9"/>
    <property type="match status" value="1"/>
</dbReference>
<dbReference type="PANTHER" id="PTHR31623:SF33">
    <property type="entry name" value="STEMMADENINE O-ACETYLTRANSFERASE-LIKE"/>
    <property type="match status" value="1"/>
</dbReference>
<dbReference type="Pfam" id="PF02458">
    <property type="entry name" value="Transferase"/>
    <property type="match status" value="1"/>
</dbReference>
<proteinExistence type="evidence at protein level"/>
<evidence type="ECO:0000250" key="1">
    <source>
        <dbReference type="UniProtKB" id="Q70PR7"/>
    </source>
</evidence>
<evidence type="ECO:0000269" key="2">
    <source>
    </source>
</evidence>
<evidence type="ECO:0000303" key="3">
    <source>
    </source>
</evidence>
<evidence type="ECO:0000305" key="4"/>
<evidence type="ECO:0000312" key="5">
    <source>
        <dbReference type="EMBL" id="KDO58318.1"/>
    </source>
</evidence>
<organism>
    <name type="scientific">Citrus sinensis</name>
    <name type="common">Sweet orange</name>
    <name type="synonym">Citrus aurantium var. sinensis</name>
    <dbReference type="NCBI Taxonomy" id="2711"/>
    <lineage>
        <taxon>Eukaryota</taxon>
        <taxon>Viridiplantae</taxon>
        <taxon>Streptophyta</taxon>
        <taxon>Embryophyta</taxon>
        <taxon>Tracheophyta</taxon>
        <taxon>Spermatophyta</taxon>
        <taxon>Magnoliopsida</taxon>
        <taxon>eudicotyledons</taxon>
        <taxon>Gunneridae</taxon>
        <taxon>Pentapetalae</taxon>
        <taxon>rosids</taxon>
        <taxon>malvids</taxon>
        <taxon>Sapindales</taxon>
        <taxon>Rutaceae</taxon>
        <taxon>Aurantioideae</taxon>
        <taxon>Citrus</taxon>
    </lineage>
</organism>
<name>L7AT_CITSI</name>
<feature type="chain" id="PRO_0000461345" description="Limonoid 7-O-acetyltransferse">
    <location>
        <begin position="1"/>
        <end position="459"/>
    </location>
</feature>
<feature type="active site" description="Proton acceptor" evidence="1">
    <location>
        <position position="167"/>
    </location>
</feature>
<feature type="active site" description="Proton acceptor" evidence="1">
    <location>
        <position position="391"/>
    </location>
</feature>
<feature type="sequence conflict" description="In Ref. 1; WCJ12488." evidence="4" ref="1">
    <original>I</original>
    <variation>K</variation>
    <location>
        <position position="302"/>
    </location>
</feature>
<feature type="sequence conflict" description="In Ref. 1; WCJ12488." evidence="4" ref="1">
    <original>E</original>
    <variation>D</variation>
    <location>
        <position position="337"/>
    </location>
</feature>
<feature type="sequence conflict" description="In Ref. 1; WCJ12488." evidence="4" ref="1">
    <original>S</original>
    <variation>N</variation>
    <location>
        <position position="414"/>
    </location>
</feature>
<feature type="sequence conflict" description="In Ref. 1; WCJ12488." evidence="4" ref="1">
    <original>R</original>
    <variation>K</variation>
    <location>
        <position position="422"/>
    </location>
</feature>
<sequence>MEPEILSIELIKPSSPTPRHLKTHKLCFLDQYRNHAYFPMVFFYSVTHDTNLNLSNETDIAQIVSVRLQLLKQSLPETLSLFYPFAGKIKDNLSIDCSDEGIYFTEARFKSPLKEFFNQQNFSCLTYKFVPFDAKELEGSISGLHVAKIQVTSFACGGIVICACLSHLFADGATLCSFLKCWVATACKNNEQRISPNNDASWLFPQNEAYPKEGTWLAMCPRFFGHGRFVTRRFVFDAKAIATIKAKASSSTRVQNPTPTRVEAVSALFSKCVMAAFKAKHGSHKTTLLTHSVNLRNKAKSILSEYSMGNIVWNANALCTNEEAELDLEGLVCKLREAMMKINGDFVKSLLGDEGFLNLCQAIKDENGVCSKAKERINFSSWCNFGLYDIDFGWGKPMWVSVIGLDGKLPYFSSTIILLDTRFGDGIEAWVYLLEEDMNTLELDKELLALATLDPCPLW</sequence>
<gene>
    <name evidence="3" type="primary">L7AT</name>
    <name evidence="5" type="ORF">CISIN_1g037986mg</name>
</gene>
<protein>
    <recommendedName>
        <fullName evidence="3">Limonoid 7-O-acetyltransferse</fullName>
        <shortName evidence="3">CsL7AT</shortName>
        <ecNumber evidence="2">2.1.1.-</ecNumber>
    </recommendedName>
</protein>
<accession>A0A067ETA8</accession>
<keyword id="KW-0012">Acyltransferase</keyword>
<keyword id="KW-1185">Reference proteome</keyword>
<keyword id="KW-0808">Transferase</keyword>
<reference key="1">
    <citation type="journal article" date="2023" name="Science">
        <title>Complex scaffold remodeling in plant triterpene biosynthesis.</title>
        <authorList>
            <person name="De La Pena R."/>
            <person name="Hodgson H."/>
            <person name="Liu J.C."/>
            <person name="Stephenson M.J."/>
            <person name="Martin A.C."/>
            <person name="Owen C."/>
            <person name="Harkess A."/>
            <person name="Leebens-Mack J."/>
            <person name="Jimenez L.E."/>
            <person name="Osbourn A."/>
            <person name="Sattely E.S."/>
        </authorList>
    </citation>
    <scope>NUCLEOTIDE SEQUENCE [MRNA]</scope>
    <scope>FUNCTION</scope>
    <scope>CATALYTIC ACTIVITY</scope>
    <scope>PATHWAY</scope>
    <scope>TISSUE SPECIFICITY</scope>
    <source>
        <strain>cv. Valencia</strain>
    </source>
</reference>
<reference key="2">
    <citation type="submission" date="2014-04" db="EMBL/GenBank/DDBJ databases">
        <authorList>
            <consortium name="International Citrus Genome Consortium"/>
            <person name="Gmitter F."/>
            <person name="Chen C."/>
            <person name="Farmerie W."/>
            <person name="Harkins T."/>
            <person name="Desany B."/>
            <person name="Mohiuddin M."/>
            <person name="Kodira C."/>
            <person name="Borodovsky M."/>
            <person name="Lomsadze A."/>
            <person name="Burns P."/>
            <person name="Jenkins J."/>
            <person name="Prochnik S."/>
            <person name="Shu S."/>
            <person name="Chapman J."/>
            <person name="Pitluck S."/>
            <person name="Schmutz J."/>
            <person name="Rokhsar D."/>
        </authorList>
    </citation>
    <scope>NUCLEOTIDE SEQUENCE [LARGE SCALE GENOMIC DNA]</scope>
    <source>
        <strain>cv. Ridge Pineapple sweet orange</strain>
    </source>
</reference>
<comment type="function">
    <text evidence="2">Acetyltransferase involved in the biosynthesis of limonoids triterpene natural products such as limonin, a compound with insecticidal activity responsible for the bitter taste in citrus (PubMed:36701471). Catalyzes the formation of (1S)-1,7-diacetoxy-luvungin A from (1S)-1-acetoxy-luvungin A (PubMed:36701471).</text>
</comment>
<comment type="catalytic activity">
    <reaction evidence="2">
        <text>(1S)-1-acetoxy-luvungin A + acetyl-CoA = (1S)-1,7-diacetoxy-luvungin A + CoA</text>
        <dbReference type="Rhea" id="RHEA:80331"/>
        <dbReference type="ChEBI" id="CHEBI:57287"/>
        <dbReference type="ChEBI" id="CHEBI:57288"/>
        <dbReference type="ChEBI" id="CHEBI:231478"/>
        <dbReference type="ChEBI" id="CHEBI:231479"/>
    </reaction>
    <physiologicalReaction direction="left-to-right" evidence="2">
        <dbReference type="Rhea" id="RHEA:80332"/>
    </physiologicalReaction>
</comment>
<comment type="pathway">
    <text evidence="2">Secondary metabolite biosynthesis; terpenoid biosynthesis.</text>
</comment>
<comment type="subunit">
    <text evidence="1">Monomer.</text>
</comment>
<comment type="tissue specificity">
    <text evidence="2">Expressed in maturing fruits and in juice vesicles.</text>
</comment>
<comment type="similarity">
    <text evidence="4">Belongs to the plant acyltransferase family.</text>
</comment>